<accession>Q9Y946</accession>
<feature type="chain" id="PRO_0000156663" description="Mevalonate kinase">
    <location>
        <begin position="1"/>
        <end position="324"/>
    </location>
</feature>
<feature type="active site" description="Proton acceptor" evidence="1">
    <location>
        <position position="154"/>
    </location>
</feature>
<feature type="binding site" evidence="1">
    <location>
        <begin position="103"/>
        <end position="113"/>
    </location>
    <ligand>
        <name>ATP</name>
        <dbReference type="ChEBI" id="CHEBI:30616"/>
    </ligand>
</feature>
<proteinExistence type="inferred from homology"/>
<gene>
    <name evidence="1" type="primary">mvk</name>
    <name type="ordered locus">APE_2439</name>
</gene>
<dbReference type="EC" id="2.7.1.36" evidence="1"/>
<dbReference type="EMBL" id="BA000002">
    <property type="protein sequence ID" value="BAA81454.1"/>
    <property type="molecule type" value="Genomic_DNA"/>
</dbReference>
<dbReference type="PIR" id="F72474">
    <property type="entry name" value="F72474"/>
</dbReference>
<dbReference type="RefSeq" id="WP_010867007.1">
    <property type="nucleotide sequence ID" value="NC_000854.2"/>
</dbReference>
<dbReference type="SMR" id="Q9Y946"/>
<dbReference type="STRING" id="272557.APE_2439"/>
<dbReference type="EnsemblBacteria" id="BAA81454">
    <property type="protein sequence ID" value="BAA81454"/>
    <property type="gene ID" value="APE_2439"/>
</dbReference>
<dbReference type="GeneID" id="1445420"/>
<dbReference type="KEGG" id="ape:APE_2439"/>
<dbReference type="PATRIC" id="fig|272557.25.peg.1620"/>
<dbReference type="eggNOG" id="arCOG01028">
    <property type="taxonomic scope" value="Archaea"/>
</dbReference>
<dbReference type="UniPathway" id="UPA00057">
    <property type="reaction ID" value="UER00098"/>
</dbReference>
<dbReference type="Proteomes" id="UP000002518">
    <property type="component" value="Chromosome"/>
</dbReference>
<dbReference type="GO" id="GO:0005829">
    <property type="term" value="C:cytosol"/>
    <property type="evidence" value="ECO:0007669"/>
    <property type="project" value="TreeGrafter"/>
</dbReference>
<dbReference type="GO" id="GO:0005524">
    <property type="term" value="F:ATP binding"/>
    <property type="evidence" value="ECO:0007669"/>
    <property type="project" value="UniProtKB-UniRule"/>
</dbReference>
<dbReference type="GO" id="GO:0000287">
    <property type="term" value="F:magnesium ion binding"/>
    <property type="evidence" value="ECO:0007669"/>
    <property type="project" value="UniProtKB-UniRule"/>
</dbReference>
<dbReference type="GO" id="GO:0004496">
    <property type="term" value="F:mevalonate kinase activity"/>
    <property type="evidence" value="ECO:0007669"/>
    <property type="project" value="UniProtKB-UniRule"/>
</dbReference>
<dbReference type="GO" id="GO:0019287">
    <property type="term" value="P:isopentenyl diphosphate biosynthetic process, mevalonate pathway"/>
    <property type="evidence" value="ECO:0007669"/>
    <property type="project" value="UniProtKB-UniRule"/>
</dbReference>
<dbReference type="Gene3D" id="3.30.230.10">
    <property type="match status" value="1"/>
</dbReference>
<dbReference type="Gene3D" id="3.30.70.890">
    <property type="entry name" value="GHMP kinase, C-terminal domain"/>
    <property type="match status" value="1"/>
</dbReference>
<dbReference type="HAMAP" id="MF_00217">
    <property type="entry name" value="Mevalonate_kinase"/>
    <property type="match status" value="1"/>
</dbReference>
<dbReference type="InterPro" id="IPR013750">
    <property type="entry name" value="GHMP_kinase_C_dom"/>
</dbReference>
<dbReference type="InterPro" id="IPR036554">
    <property type="entry name" value="GHMP_kinase_C_sf"/>
</dbReference>
<dbReference type="InterPro" id="IPR006204">
    <property type="entry name" value="GHMP_kinase_N_dom"/>
</dbReference>
<dbReference type="InterPro" id="IPR006205">
    <property type="entry name" value="Mev_gal_kin"/>
</dbReference>
<dbReference type="InterPro" id="IPR022937">
    <property type="entry name" value="Mevalonate_kinase_arc"/>
</dbReference>
<dbReference type="InterPro" id="IPR020568">
    <property type="entry name" value="Ribosomal_Su5_D2-typ_SF"/>
</dbReference>
<dbReference type="InterPro" id="IPR014721">
    <property type="entry name" value="Ribsml_uS5_D2-typ_fold_subgr"/>
</dbReference>
<dbReference type="NCBIfam" id="TIGR00549">
    <property type="entry name" value="mevalon_kin"/>
    <property type="match status" value="1"/>
</dbReference>
<dbReference type="PANTHER" id="PTHR43290">
    <property type="entry name" value="MEVALONATE KINASE"/>
    <property type="match status" value="1"/>
</dbReference>
<dbReference type="PANTHER" id="PTHR43290:SF2">
    <property type="entry name" value="MEVALONATE KINASE"/>
    <property type="match status" value="1"/>
</dbReference>
<dbReference type="Pfam" id="PF08544">
    <property type="entry name" value="GHMP_kinases_C"/>
    <property type="match status" value="1"/>
</dbReference>
<dbReference type="Pfam" id="PF00288">
    <property type="entry name" value="GHMP_kinases_N"/>
    <property type="match status" value="1"/>
</dbReference>
<dbReference type="PRINTS" id="PR00959">
    <property type="entry name" value="MEVGALKINASE"/>
</dbReference>
<dbReference type="SUPFAM" id="SSF55060">
    <property type="entry name" value="GHMP Kinase, C-terminal domain"/>
    <property type="match status" value="1"/>
</dbReference>
<dbReference type="SUPFAM" id="SSF54211">
    <property type="entry name" value="Ribosomal protein S5 domain 2-like"/>
    <property type="match status" value="1"/>
</dbReference>
<reference key="1">
    <citation type="journal article" date="1999" name="DNA Res.">
        <title>Complete genome sequence of an aerobic hyper-thermophilic crenarchaeon, Aeropyrum pernix K1.</title>
        <authorList>
            <person name="Kawarabayasi Y."/>
            <person name="Hino Y."/>
            <person name="Horikawa H."/>
            <person name="Yamazaki S."/>
            <person name="Haikawa Y."/>
            <person name="Jin-no K."/>
            <person name="Takahashi M."/>
            <person name="Sekine M."/>
            <person name="Baba S."/>
            <person name="Ankai A."/>
            <person name="Kosugi H."/>
            <person name="Hosoyama A."/>
            <person name="Fukui S."/>
            <person name="Nagai Y."/>
            <person name="Nishijima K."/>
            <person name="Nakazawa H."/>
            <person name="Takamiya M."/>
            <person name="Masuda S."/>
            <person name="Funahashi T."/>
            <person name="Tanaka T."/>
            <person name="Kudoh Y."/>
            <person name="Yamazaki J."/>
            <person name="Kushida N."/>
            <person name="Oguchi A."/>
            <person name="Aoki K."/>
            <person name="Kubota K."/>
            <person name="Nakamura Y."/>
            <person name="Nomura N."/>
            <person name="Sako Y."/>
            <person name="Kikuchi H."/>
        </authorList>
    </citation>
    <scope>NUCLEOTIDE SEQUENCE [LARGE SCALE GENOMIC DNA]</scope>
    <source>
        <strain>ATCC 700893 / DSM 11879 / JCM 9820 / NBRC 100138 / K1</strain>
    </source>
</reference>
<protein>
    <recommendedName>
        <fullName evidence="1">Mevalonate kinase</fullName>
        <shortName evidence="1">MK</shortName>
        <shortName evidence="1">MVK</shortName>
        <ecNumber evidence="1">2.7.1.36</ecNumber>
    </recommendedName>
</protein>
<organism>
    <name type="scientific">Aeropyrum pernix (strain ATCC 700893 / DSM 11879 / JCM 9820 / NBRC 100138 / K1)</name>
    <dbReference type="NCBI Taxonomy" id="272557"/>
    <lineage>
        <taxon>Archaea</taxon>
        <taxon>Thermoproteota</taxon>
        <taxon>Thermoprotei</taxon>
        <taxon>Desulfurococcales</taxon>
        <taxon>Desulfurococcaceae</taxon>
        <taxon>Aeropyrum</taxon>
    </lineage>
</organism>
<evidence type="ECO:0000255" key="1">
    <source>
        <dbReference type="HAMAP-Rule" id="MF_00217"/>
    </source>
</evidence>
<keyword id="KW-0067">ATP-binding</keyword>
<keyword id="KW-0963">Cytoplasm</keyword>
<keyword id="KW-0414">Isoprene biosynthesis</keyword>
<keyword id="KW-0418">Kinase</keyword>
<keyword id="KW-0444">Lipid biosynthesis</keyword>
<keyword id="KW-0443">Lipid metabolism</keyword>
<keyword id="KW-0460">Magnesium</keyword>
<keyword id="KW-0547">Nucleotide-binding</keyword>
<keyword id="KW-1185">Reference proteome</keyword>
<keyword id="KW-0808">Transferase</keyword>
<sequence length="324" mass="33647">MRRAARASAPGKVIIVGEHFVVRGSLAIVAAIGRRLRVTVRSGGKGIVLESSMLGRHSAPLPGQGAAAKVSPVLEPYIAVLRSLAARGYSVVPHTILVESGIPPRAGLGSSAASMVAYALSYSAMHGDPLSAEDLYSVAMEGEKIAHGKPSGVDVTIAVRGGVLAYRRGENPVDIRPGLTGVTLLVADTGVERRTRDVVEHVLSIADALGEASTYIYRAADLIAREALHAIEKGDAERLGLIMNAAQGLLSSLGASSLEIETLVYRMRSAGALGAKLTGAGWGGCVIGLFKEGEVERGLESVVESSSQAFTASIAEEGARLEEF</sequence>
<comment type="function">
    <text evidence="1">Catalyzes the phosphorylation of (R)-mevalonate (MVA) to (R)-mevalonate 5-phosphate (MVAP). Functions in the mevalonate (MVA) pathway leading to isopentenyl diphosphate (IPP), a key precursor for the biosynthesis of isoprenoid compounds such as archaeal membrane lipids.</text>
</comment>
<comment type="catalytic activity">
    <reaction evidence="1">
        <text>(R)-mevalonate + ATP = (R)-5-phosphomevalonate + ADP + H(+)</text>
        <dbReference type="Rhea" id="RHEA:17065"/>
        <dbReference type="ChEBI" id="CHEBI:15378"/>
        <dbReference type="ChEBI" id="CHEBI:30616"/>
        <dbReference type="ChEBI" id="CHEBI:36464"/>
        <dbReference type="ChEBI" id="CHEBI:58146"/>
        <dbReference type="ChEBI" id="CHEBI:456216"/>
        <dbReference type="EC" id="2.7.1.36"/>
    </reaction>
</comment>
<comment type="cofactor">
    <cofactor evidence="1">
        <name>Mg(2+)</name>
        <dbReference type="ChEBI" id="CHEBI:18420"/>
    </cofactor>
</comment>
<comment type="pathway">
    <text evidence="1">Isoprenoid biosynthesis; isopentenyl diphosphate biosynthesis via mevalonate pathway; isopentenyl diphosphate from (R)-mevalonate: step 1/3.</text>
</comment>
<comment type="subunit">
    <text evidence="1">Homodimer.</text>
</comment>
<comment type="subcellular location">
    <subcellularLocation>
        <location evidence="1">Cytoplasm</location>
    </subcellularLocation>
</comment>
<comment type="similarity">
    <text evidence="1">Belongs to the GHMP kinase family. Mevalonate kinase subfamily.</text>
</comment>
<name>MVK_AERPE</name>